<reference key="1">
    <citation type="journal article" date="2002" name="Nucleic Acids Res.">
        <title>Genome sequence of Oceanobacillus iheyensis isolated from the Iheya Ridge and its unexpected adaptive capabilities to extreme environments.</title>
        <authorList>
            <person name="Takami H."/>
            <person name="Takaki Y."/>
            <person name="Uchiyama I."/>
        </authorList>
    </citation>
    <scope>NUCLEOTIDE SEQUENCE [LARGE SCALE GENOMIC DNA]</scope>
    <source>
        <strain>DSM 14371 / CIP 107618 / JCM 11309 / KCTC 3954 / HTE831</strain>
    </source>
</reference>
<accession>Q8ETW6</accession>
<sequence>MSKKLEITLNRSVIGGTGVQKKTVEALGLKKIRQSVVREDTPAVRGMVNRVSHLLTVKEV</sequence>
<evidence type="ECO:0000255" key="1">
    <source>
        <dbReference type="HAMAP-Rule" id="MF_01371"/>
    </source>
</evidence>
<evidence type="ECO:0000305" key="2"/>
<gene>
    <name evidence="1" type="primary">rpmD</name>
    <name type="ordered locus">OB0137</name>
</gene>
<name>RL30_OCEIH</name>
<dbReference type="EMBL" id="BA000028">
    <property type="protein sequence ID" value="BAC12093.1"/>
    <property type="molecule type" value="Genomic_DNA"/>
</dbReference>
<dbReference type="RefSeq" id="WP_011064540.1">
    <property type="nucleotide sequence ID" value="NC_004193.1"/>
</dbReference>
<dbReference type="SMR" id="Q8ETW6"/>
<dbReference type="STRING" id="221109.gene:10732327"/>
<dbReference type="KEGG" id="oih:OB0137"/>
<dbReference type="eggNOG" id="COG1841">
    <property type="taxonomic scope" value="Bacteria"/>
</dbReference>
<dbReference type="HOGENOM" id="CLU_131047_2_1_9"/>
<dbReference type="OrthoDB" id="9812790at2"/>
<dbReference type="PhylomeDB" id="Q8ETW6"/>
<dbReference type="Proteomes" id="UP000000822">
    <property type="component" value="Chromosome"/>
</dbReference>
<dbReference type="GO" id="GO:0022625">
    <property type="term" value="C:cytosolic large ribosomal subunit"/>
    <property type="evidence" value="ECO:0007669"/>
    <property type="project" value="TreeGrafter"/>
</dbReference>
<dbReference type="GO" id="GO:0003735">
    <property type="term" value="F:structural constituent of ribosome"/>
    <property type="evidence" value="ECO:0007669"/>
    <property type="project" value="InterPro"/>
</dbReference>
<dbReference type="GO" id="GO:0006412">
    <property type="term" value="P:translation"/>
    <property type="evidence" value="ECO:0007669"/>
    <property type="project" value="UniProtKB-UniRule"/>
</dbReference>
<dbReference type="CDD" id="cd01658">
    <property type="entry name" value="Ribosomal_L30"/>
    <property type="match status" value="1"/>
</dbReference>
<dbReference type="FunFam" id="3.30.1390.20:FF:000001">
    <property type="entry name" value="50S ribosomal protein L30"/>
    <property type="match status" value="1"/>
</dbReference>
<dbReference type="Gene3D" id="3.30.1390.20">
    <property type="entry name" value="Ribosomal protein L30, ferredoxin-like fold domain"/>
    <property type="match status" value="1"/>
</dbReference>
<dbReference type="HAMAP" id="MF_01371_B">
    <property type="entry name" value="Ribosomal_uL30_B"/>
    <property type="match status" value="1"/>
</dbReference>
<dbReference type="InterPro" id="IPR036919">
    <property type="entry name" value="Ribo_uL30_ferredoxin-like_sf"/>
</dbReference>
<dbReference type="InterPro" id="IPR005996">
    <property type="entry name" value="Ribosomal_uL30_bac-type"/>
</dbReference>
<dbReference type="InterPro" id="IPR016082">
    <property type="entry name" value="Ribosomal_uL30_ferredoxin-like"/>
</dbReference>
<dbReference type="NCBIfam" id="TIGR01308">
    <property type="entry name" value="rpmD_bact"/>
    <property type="match status" value="1"/>
</dbReference>
<dbReference type="PANTHER" id="PTHR15892:SF2">
    <property type="entry name" value="LARGE RIBOSOMAL SUBUNIT PROTEIN UL30M"/>
    <property type="match status" value="1"/>
</dbReference>
<dbReference type="PANTHER" id="PTHR15892">
    <property type="entry name" value="MITOCHONDRIAL RIBOSOMAL PROTEIN L30"/>
    <property type="match status" value="1"/>
</dbReference>
<dbReference type="Pfam" id="PF00327">
    <property type="entry name" value="Ribosomal_L30"/>
    <property type="match status" value="1"/>
</dbReference>
<dbReference type="PIRSF" id="PIRSF002211">
    <property type="entry name" value="Ribosomal_L30_bac-type"/>
    <property type="match status" value="1"/>
</dbReference>
<dbReference type="SUPFAM" id="SSF55129">
    <property type="entry name" value="Ribosomal protein L30p/L7e"/>
    <property type="match status" value="1"/>
</dbReference>
<comment type="subunit">
    <text evidence="1">Part of the 50S ribosomal subunit.</text>
</comment>
<comment type="similarity">
    <text evidence="1">Belongs to the universal ribosomal protein uL30 family.</text>
</comment>
<feature type="chain" id="PRO_0000273817" description="Large ribosomal subunit protein uL30">
    <location>
        <begin position="1"/>
        <end position="60"/>
    </location>
</feature>
<keyword id="KW-1185">Reference proteome</keyword>
<keyword id="KW-0687">Ribonucleoprotein</keyword>
<keyword id="KW-0689">Ribosomal protein</keyword>
<protein>
    <recommendedName>
        <fullName evidence="1">Large ribosomal subunit protein uL30</fullName>
    </recommendedName>
    <alternativeName>
        <fullName evidence="2">50S ribosomal protein L30</fullName>
    </alternativeName>
</protein>
<proteinExistence type="inferred from homology"/>
<organism>
    <name type="scientific">Oceanobacillus iheyensis (strain DSM 14371 / CIP 107618 / JCM 11309 / KCTC 3954 / HTE831)</name>
    <dbReference type="NCBI Taxonomy" id="221109"/>
    <lineage>
        <taxon>Bacteria</taxon>
        <taxon>Bacillati</taxon>
        <taxon>Bacillota</taxon>
        <taxon>Bacilli</taxon>
        <taxon>Bacillales</taxon>
        <taxon>Bacillaceae</taxon>
        <taxon>Oceanobacillus</taxon>
    </lineage>
</organism>